<organism>
    <name type="scientific">Bordetella avium (strain 197N)</name>
    <dbReference type="NCBI Taxonomy" id="360910"/>
    <lineage>
        <taxon>Bacteria</taxon>
        <taxon>Pseudomonadati</taxon>
        <taxon>Pseudomonadota</taxon>
        <taxon>Betaproteobacteria</taxon>
        <taxon>Burkholderiales</taxon>
        <taxon>Alcaligenaceae</taxon>
        <taxon>Bordetella</taxon>
    </lineage>
</organism>
<accession>Q2KXU8</accession>
<feature type="chain" id="PRO_1000187027" description="Acetaldehyde dehydrogenase">
    <location>
        <begin position="1"/>
        <end position="316"/>
    </location>
</feature>
<feature type="active site" description="Acyl-thioester intermediate" evidence="1">
    <location>
        <position position="132"/>
    </location>
</feature>
<feature type="binding site" evidence="1">
    <location>
        <begin position="12"/>
        <end position="15"/>
    </location>
    <ligand>
        <name>NAD(+)</name>
        <dbReference type="ChEBI" id="CHEBI:57540"/>
    </ligand>
</feature>
<feature type="binding site" evidence="1">
    <location>
        <begin position="163"/>
        <end position="171"/>
    </location>
    <ligand>
        <name>NAD(+)</name>
        <dbReference type="ChEBI" id="CHEBI:57540"/>
    </ligand>
</feature>
<feature type="binding site" evidence="1">
    <location>
        <position position="289"/>
    </location>
    <ligand>
        <name>NAD(+)</name>
        <dbReference type="ChEBI" id="CHEBI:57540"/>
    </ligand>
</feature>
<dbReference type="EC" id="1.2.1.10" evidence="1"/>
<dbReference type="EMBL" id="AM167904">
    <property type="protein sequence ID" value="CAJ48204.1"/>
    <property type="molecule type" value="Genomic_DNA"/>
</dbReference>
<dbReference type="RefSeq" id="WP_012416294.1">
    <property type="nucleotide sequence ID" value="NC_010645.1"/>
</dbReference>
<dbReference type="SMR" id="Q2KXU8"/>
<dbReference type="STRING" id="360910.BAV0599"/>
<dbReference type="GeneID" id="92936218"/>
<dbReference type="KEGG" id="bav:BAV0599"/>
<dbReference type="eggNOG" id="COG4569">
    <property type="taxonomic scope" value="Bacteria"/>
</dbReference>
<dbReference type="HOGENOM" id="CLU_062208_0_0_4"/>
<dbReference type="OrthoDB" id="9786743at2"/>
<dbReference type="Proteomes" id="UP000001977">
    <property type="component" value="Chromosome"/>
</dbReference>
<dbReference type="GO" id="GO:0008774">
    <property type="term" value="F:acetaldehyde dehydrogenase (acetylating) activity"/>
    <property type="evidence" value="ECO:0007669"/>
    <property type="project" value="UniProtKB-UniRule"/>
</dbReference>
<dbReference type="GO" id="GO:0051287">
    <property type="term" value="F:NAD binding"/>
    <property type="evidence" value="ECO:0007669"/>
    <property type="project" value="UniProtKB-UniRule"/>
</dbReference>
<dbReference type="GO" id="GO:0009056">
    <property type="term" value="P:catabolic process"/>
    <property type="evidence" value="ECO:0007669"/>
    <property type="project" value="UniProtKB-KW"/>
</dbReference>
<dbReference type="CDD" id="cd23933">
    <property type="entry name" value="ALDH_C"/>
    <property type="match status" value="1"/>
</dbReference>
<dbReference type="Gene3D" id="3.30.360.10">
    <property type="entry name" value="Dihydrodipicolinate Reductase, domain 2"/>
    <property type="match status" value="1"/>
</dbReference>
<dbReference type="Gene3D" id="3.40.50.720">
    <property type="entry name" value="NAD(P)-binding Rossmann-like Domain"/>
    <property type="match status" value="1"/>
</dbReference>
<dbReference type="HAMAP" id="MF_01657">
    <property type="entry name" value="Ac_ald_DH_ac"/>
    <property type="match status" value="1"/>
</dbReference>
<dbReference type="InterPro" id="IPR003361">
    <property type="entry name" value="Acetaldehyde_dehydrogenase"/>
</dbReference>
<dbReference type="InterPro" id="IPR015426">
    <property type="entry name" value="Acetylaldehyde_DH_C"/>
</dbReference>
<dbReference type="InterPro" id="IPR036291">
    <property type="entry name" value="NAD(P)-bd_dom_sf"/>
</dbReference>
<dbReference type="InterPro" id="IPR000534">
    <property type="entry name" value="Semialdehyde_DH_NAD-bd"/>
</dbReference>
<dbReference type="NCBIfam" id="TIGR03215">
    <property type="entry name" value="ac_ald_DH_ac"/>
    <property type="match status" value="1"/>
</dbReference>
<dbReference type="NCBIfam" id="NF006157">
    <property type="entry name" value="PRK08300.1"/>
    <property type="match status" value="1"/>
</dbReference>
<dbReference type="Pfam" id="PF09290">
    <property type="entry name" value="AcetDehyd-dimer"/>
    <property type="match status" value="1"/>
</dbReference>
<dbReference type="Pfam" id="PF01118">
    <property type="entry name" value="Semialdhyde_dh"/>
    <property type="match status" value="1"/>
</dbReference>
<dbReference type="PIRSF" id="PIRSF015689">
    <property type="entry name" value="Actaldh_dh_actl"/>
    <property type="match status" value="1"/>
</dbReference>
<dbReference type="SMART" id="SM00859">
    <property type="entry name" value="Semialdhyde_dh"/>
    <property type="match status" value="1"/>
</dbReference>
<dbReference type="SUPFAM" id="SSF55347">
    <property type="entry name" value="Glyceraldehyde-3-phosphate dehydrogenase-like, C-terminal domain"/>
    <property type="match status" value="1"/>
</dbReference>
<dbReference type="SUPFAM" id="SSF51735">
    <property type="entry name" value="NAD(P)-binding Rossmann-fold domains"/>
    <property type="match status" value="1"/>
</dbReference>
<proteinExistence type="inferred from homology"/>
<sequence length="316" mass="33179">MTRRLKAAIIGSGNIGTDLMIKILRHGKHIDMAAMVGIDPKSDGLARAARLGVATTYEGVAGLIRLPVFADIDFVFDATSAGAHVENDALLRAAKPGIRLVDLTPAAIGPYCIPVVNGDAHLDALNVNMVTCGGQATIPMVAAVSRVARVHYAEIVASIASKSAGPGTRANIDEFTETTAKAIEAVGGATKGKAIIVMNPAEPPLIMRDTVYTLSQPADEEAIAESVERMVAAVQAYVPGYRLKQKVQFDRIDSPLRIPGVGDALKGLKTSIFLEVEGAAHYLPAYAGNLDIMTSAALRTAEHMAQRMLADATVSA</sequence>
<evidence type="ECO:0000255" key="1">
    <source>
        <dbReference type="HAMAP-Rule" id="MF_01657"/>
    </source>
</evidence>
<gene>
    <name type="primary">bphG</name>
    <name type="ordered locus">BAV0599</name>
</gene>
<keyword id="KW-0058">Aromatic hydrocarbons catabolism</keyword>
<keyword id="KW-0520">NAD</keyword>
<keyword id="KW-0560">Oxidoreductase</keyword>
<keyword id="KW-1185">Reference proteome</keyword>
<protein>
    <recommendedName>
        <fullName evidence="1">Acetaldehyde dehydrogenase</fullName>
        <ecNumber evidence="1">1.2.1.10</ecNumber>
    </recommendedName>
    <alternativeName>
        <fullName evidence="1">Acetaldehyde dehydrogenase [acetylating]</fullName>
    </alternativeName>
</protein>
<name>ACDH_BORA1</name>
<reference key="1">
    <citation type="journal article" date="2006" name="J. Bacteriol.">
        <title>Comparison of the genome sequence of the poultry pathogen Bordetella avium with those of B. bronchiseptica, B. pertussis, and B. parapertussis reveals extensive diversity in surface structures associated with host interaction.</title>
        <authorList>
            <person name="Sebaihia M."/>
            <person name="Preston A."/>
            <person name="Maskell D.J."/>
            <person name="Kuzmiak H."/>
            <person name="Connell T.D."/>
            <person name="King N.D."/>
            <person name="Orndorff P.E."/>
            <person name="Miyamoto D.M."/>
            <person name="Thomson N.R."/>
            <person name="Harris D."/>
            <person name="Goble A."/>
            <person name="Lord A."/>
            <person name="Murphy L."/>
            <person name="Quail M.A."/>
            <person name="Rutter S."/>
            <person name="Squares R."/>
            <person name="Squares S."/>
            <person name="Woodward J."/>
            <person name="Parkhill J."/>
            <person name="Temple L.M."/>
        </authorList>
    </citation>
    <scope>NUCLEOTIDE SEQUENCE [LARGE SCALE GENOMIC DNA]</scope>
    <source>
        <strain>197N</strain>
    </source>
</reference>
<comment type="catalytic activity">
    <reaction evidence="1">
        <text>acetaldehyde + NAD(+) + CoA = acetyl-CoA + NADH + H(+)</text>
        <dbReference type="Rhea" id="RHEA:23288"/>
        <dbReference type="ChEBI" id="CHEBI:15343"/>
        <dbReference type="ChEBI" id="CHEBI:15378"/>
        <dbReference type="ChEBI" id="CHEBI:57287"/>
        <dbReference type="ChEBI" id="CHEBI:57288"/>
        <dbReference type="ChEBI" id="CHEBI:57540"/>
        <dbReference type="ChEBI" id="CHEBI:57945"/>
        <dbReference type="EC" id="1.2.1.10"/>
    </reaction>
</comment>
<comment type="similarity">
    <text evidence="1">Belongs to the acetaldehyde dehydrogenase family.</text>
</comment>